<keyword id="KW-0165">Cleavage on pair of basic residues</keyword>
<keyword id="KW-1015">Disulfide bond</keyword>
<keyword id="KW-0325">Glycoprotein</keyword>
<keyword id="KW-0339">Growth factor</keyword>
<keyword id="KW-0446">Lipid-binding</keyword>
<keyword id="KW-0481">Metalloenzyme inhibitor</keyword>
<keyword id="KW-0483">Metalloprotease inhibitor</keyword>
<keyword id="KW-0646">Protease inhibitor</keyword>
<keyword id="KW-1185">Reference proteome</keyword>
<keyword id="KW-0964">Secreted</keyword>
<keyword id="KW-0732">Signal</keyword>
<keyword id="KW-0800">Toxin</keyword>
<accession>Q3HXY8</accession>
<evidence type="ECO:0000250" key="1"/>
<evidence type="ECO:0000250" key="2">
    <source>
        <dbReference type="UniProtKB" id="P61898"/>
    </source>
</evidence>
<evidence type="ECO:0000250" key="3">
    <source>
        <dbReference type="UniProtKB" id="P61899"/>
    </source>
</evidence>
<evidence type="ECO:0000255" key="4"/>
<evidence type="ECO:0000256" key="5">
    <source>
        <dbReference type="SAM" id="MobiDB-lite"/>
    </source>
</evidence>
<evidence type="ECO:0000305" key="6"/>
<comment type="function">
    <text evidence="2 3">Nerve growth factor is important for the development and maintenance of the sympathetic and sensory nervous systems. It stimulates division and differentiation of sympathetic and embryonic sensory neurons as well as basal forebrain cholinergic neurons in the brain. Its relevance in the snake venom is not clear. However, it has been shown to inhibit metalloproteinase-dependent proteolysis of platelet glycoprotein Ib alpha, suggesting a metalloproteinase inhibition to prevent metalloprotease autodigestion and/or protection against prey proteases (By similarity). Binds a lipid between the two protein chains in the homodimer. The lipid-bound form promotes histamine relase from mouse mast cells, contrary to the lipid-free form (By similarity).</text>
</comment>
<comment type="subunit">
    <text evidence="2">Homodimer; non-covalently linked.</text>
</comment>
<comment type="subcellular location">
    <subcellularLocation>
        <location evidence="2">Secreted</location>
    </subcellularLocation>
</comment>
<comment type="tissue specificity">
    <text>Expressed by the venom gland.</text>
</comment>
<comment type="similarity">
    <text evidence="6">Belongs to the NGF-beta family.</text>
</comment>
<proteinExistence type="evidence at transcript level"/>
<sequence>MSMLCYTLIIAFLIGIWAAPKSEDNVPLGSPATSDLSDTSCAQTHEGLKTSRNTDQRHPAPKKAEDQELASAANIIVDPKLFQKRRFQSPRVLFSTQPPPLSRDEQSVEFLDNEDTLNRNIRAKRETHPVHNRGEYSVCDSISVWVANKTKAMDIKGKPVTVMVDVNLNNHVYKQYFFETKYRNPNPVPSGCRGIDSGHWNSYCTTTQTYVRALTMEGNQASWRFIRIDAACVCVISRKTENF</sequence>
<protein>
    <recommendedName>
        <fullName>Venom nerve growth factor 2</fullName>
        <shortName>v-NGF-2</shortName>
        <shortName>vNGF-2</shortName>
    </recommendedName>
</protein>
<feature type="signal peptide" evidence="4">
    <location>
        <begin position="1"/>
        <end position="18"/>
    </location>
</feature>
<feature type="propeptide" id="PRO_0000043315" evidence="1">
    <location>
        <begin position="19"/>
        <end position="125"/>
    </location>
</feature>
<feature type="chain" id="PRO_0000043316" description="Venom nerve growth factor 2">
    <location>
        <begin position="126"/>
        <end position="243"/>
    </location>
</feature>
<feature type="region of interest" description="Disordered" evidence="5">
    <location>
        <begin position="47"/>
        <end position="67"/>
    </location>
</feature>
<feature type="compositionally biased region" description="Basic and acidic residues" evidence="5">
    <location>
        <begin position="47"/>
        <end position="66"/>
    </location>
</feature>
<feature type="glycosylation site" description="N-linked (GlcNAc...) asparagine" evidence="4">
    <location>
        <position position="148"/>
    </location>
</feature>
<feature type="disulfide bond" evidence="2">
    <location>
        <begin position="139"/>
        <end position="204"/>
    </location>
</feature>
<feature type="disulfide bond" evidence="2">
    <location>
        <begin position="192"/>
        <end position="234"/>
    </location>
</feature>
<dbReference type="EMBL" id="DQ181907">
    <property type="protein sequence ID" value="ABA60119.1"/>
    <property type="molecule type" value="mRNA"/>
</dbReference>
<dbReference type="SMR" id="Q3HXY8"/>
<dbReference type="Proteomes" id="UP000472273">
    <property type="component" value="Unplaced"/>
</dbReference>
<dbReference type="GO" id="GO:0030424">
    <property type="term" value="C:axon"/>
    <property type="evidence" value="ECO:0007669"/>
    <property type="project" value="TreeGrafter"/>
</dbReference>
<dbReference type="GO" id="GO:0030425">
    <property type="term" value="C:dendrite"/>
    <property type="evidence" value="ECO:0007669"/>
    <property type="project" value="TreeGrafter"/>
</dbReference>
<dbReference type="GO" id="GO:0005615">
    <property type="term" value="C:extracellular space"/>
    <property type="evidence" value="ECO:0007669"/>
    <property type="project" value="TreeGrafter"/>
</dbReference>
<dbReference type="GO" id="GO:0008021">
    <property type="term" value="C:synaptic vesicle"/>
    <property type="evidence" value="ECO:0007669"/>
    <property type="project" value="TreeGrafter"/>
</dbReference>
<dbReference type="GO" id="GO:0008083">
    <property type="term" value="F:growth factor activity"/>
    <property type="evidence" value="ECO:0007669"/>
    <property type="project" value="UniProtKB-KW"/>
</dbReference>
<dbReference type="GO" id="GO:0008289">
    <property type="term" value="F:lipid binding"/>
    <property type="evidence" value="ECO:0007669"/>
    <property type="project" value="UniProtKB-KW"/>
</dbReference>
<dbReference type="GO" id="GO:0008191">
    <property type="term" value="F:metalloendopeptidase inhibitor activity"/>
    <property type="evidence" value="ECO:0000250"/>
    <property type="project" value="UniProtKB"/>
</dbReference>
<dbReference type="GO" id="GO:0005163">
    <property type="term" value="F:nerve growth factor receptor binding"/>
    <property type="evidence" value="ECO:0007669"/>
    <property type="project" value="TreeGrafter"/>
</dbReference>
<dbReference type="GO" id="GO:0090729">
    <property type="term" value="F:toxin activity"/>
    <property type="evidence" value="ECO:0007669"/>
    <property type="project" value="UniProtKB-KW"/>
</dbReference>
<dbReference type="GO" id="GO:0007169">
    <property type="term" value="P:cell surface receptor protein tyrosine kinase signaling pathway"/>
    <property type="evidence" value="ECO:0007669"/>
    <property type="project" value="TreeGrafter"/>
</dbReference>
<dbReference type="GO" id="GO:0050804">
    <property type="term" value="P:modulation of chemical synaptic transmission"/>
    <property type="evidence" value="ECO:0007669"/>
    <property type="project" value="TreeGrafter"/>
</dbReference>
<dbReference type="GO" id="GO:0043524">
    <property type="term" value="P:negative regulation of neuron apoptotic process"/>
    <property type="evidence" value="ECO:0007669"/>
    <property type="project" value="TreeGrafter"/>
</dbReference>
<dbReference type="GO" id="GO:0021675">
    <property type="term" value="P:nerve development"/>
    <property type="evidence" value="ECO:0007669"/>
    <property type="project" value="TreeGrafter"/>
</dbReference>
<dbReference type="GO" id="GO:0038180">
    <property type="term" value="P:nerve growth factor signaling pathway"/>
    <property type="evidence" value="ECO:0007669"/>
    <property type="project" value="TreeGrafter"/>
</dbReference>
<dbReference type="GO" id="GO:0048812">
    <property type="term" value="P:neuron projection morphogenesis"/>
    <property type="evidence" value="ECO:0007669"/>
    <property type="project" value="TreeGrafter"/>
</dbReference>
<dbReference type="FunFam" id="2.10.90.10:FF:000002">
    <property type="entry name" value="Brain-derived neurotrophic factor"/>
    <property type="match status" value="1"/>
</dbReference>
<dbReference type="Gene3D" id="2.10.90.10">
    <property type="entry name" value="Cystine-knot cytokines"/>
    <property type="match status" value="1"/>
</dbReference>
<dbReference type="InterPro" id="IPR029034">
    <property type="entry name" value="Cystine-knot_cytokine"/>
</dbReference>
<dbReference type="InterPro" id="IPR020408">
    <property type="entry name" value="Nerve_growth_factor-like"/>
</dbReference>
<dbReference type="InterPro" id="IPR002072">
    <property type="entry name" value="Nerve_growth_factor-rel"/>
</dbReference>
<dbReference type="InterPro" id="IPR020425">
    <property type="entry name" value="Nerve_growth_factor_bsu"/>
</dbReference>
<dbReference type="InterPro" id="IPR019846">
    <property type="entry name" value="Nerve_growth_factor_CS"/>
</dbReference>
<dbReference type="InterPro" id="IPR020433">
    <property type="entry name" value="Venom_nerve_growth_factor"/>
</dbReference>
<dbReference type="PANTHER" id="PTHR11589:SF10">
    <property type="entry name" value="BETA-NERVE GROWTH FACTOR"/>
    <property type="match status" value="1"/>
</dbReference>
<dbReference type="PANTHER" id="PTHR11589">
    <property type="entry name" value="NERVE GROWTH FACTOR NGF -RELATED"/>
    <property type="match status" value="1"/>
</dbReference>
<dbReference type="Pfam" id="PF00243">
    <property type="entry name" value="NGF"/>
    <property type="match status" value="1"/>
</dbReference>
<dbReference type="PIRSF" id="PIRSF001789">
    <property type="entry name" value="NGF"/>
    <property type="match status" value="1"/>
</dbReference>
<dbReference type="PRINTS" id="PR00268">
    <property type="entry name" value="NGF"/>
</dbReference>
<dbReference type="PRINTS" id="PR01913">
    <property type="entry name" value="NGFBETA"/>
</dbReference>
<dbReference type="PRINTS" id="PR01917">
    <property type="entry name" value="VENOMNGF"/>
</dbReference>
<dbReference type="SMART" id="SM00140">
    <property type="entry name" value="NGF"/>
    <property type="match status" value="1"/>
</dbReference>
<dbReference type="SUPFAM" id="SSF57501">
    <property type="entry name" value="Cystine-knot cytokines"/>
    <property type="match status" value="1"/>
</dbReference>
<dbReference type="PROSITE" id="PS00248">
    <property type="entry name" value="NGF_1"/>
    <property type="match status" value="1"/>
</dbReference>
<dbReference type="PROSITE" id="PS50270">
    <property type="entry name" value="NGF_2"/>
    <property type="match status" value="1"/>
</dbReference>
<reference key="1">
    <citation type="submission" date="2005-08" db="EMBL/GenBank/DDBJ databases">
        <title>Identification of nerve growth factor as a ubiquitous component of Australian elapid snake venoms.</title>
        <authorList>
            <person name="Earl S.T.H."/>
            <person name="St Pierre L."/>
            <person name="Birrell G.W."/>
            <person name="Wallis T.P."/>
            <person name="Masci P.P."/>
            <person name="de Jersey J."/>
            <person name="Gorman J.J."/>
            <person name="Lavin M.F."/>
        </authorList>
    </citation>
    <scope>NUCLEOTIDE SEQUENCE [MRNA]</scope>
    <source>
        <tissue>Venom gland</tissue>
    </source>
</reference>
<organism>
    <name type="scientific">Pseudonaja textilis</name>
    <name type="common">Eastern brown snake</name>
    <dbReference type="NCBI Taxonomy" id="8673"/>
    <lineage>
        <taxon>Eukaryota</taxon>
        <taxon>Metazoa</taxon>
        <taxon>Chordata</taxon>
        <taxon>Craniata</taxon>
        <taxon>Vertebrata</taxon>
        <taxon>Euteleostomi</taxon>
        <taxon>Lepidosauria</taxon>
        <taxon>Squamata</taxon>
        <taxon>Bifurcata</taxon>
        <taxon>Unidentata</taxon>
        <taxon>Episquamata</taxon>
        <taxon>Toxicofera</taxon>
        <taxon>Serpentes</taxon>
        <taxon>Colubroidea</taxon>
        <taxon>Elapidae</taxon>
        <taxon>Hydrophiinae</taxon>
        <taxon>Pseudonaja</taxon>
    </lineage>
</organism>
<name>NGFV2_PSETE</name>